<sequence length="106" mass="11504">MIVLITGASSGFGWEAAKLCVAKGHRVIGCARRTERLQALQKELGDAFFPLPFDIADADALNAAFERLPEDWRAIDVLVNNAGLALGQAPAHESRLADWEQMIATN</sequence>
<accession>P39884</accession>
<organism>
    <name type="scientific">Dichelobacter nodosus</name>
    <name type="common">Bacteroides nodosus</name>
    <dbReference type="NCBI Taxonomy" id="870"/>
    <lineage>
        <taxon>Bacteria</taxon>
        <taxon>Pseudomonadati</taxon>
        <taxon>Pseudomonadota</taxon>
        <taxon>Gammaproteobacteria</taxon>
        <taxon>Cardiobacteriales</taxon>
        <taxon>Cardiobacteriaceae</taxon>
        <taxon>Dichelobacter</taxon>
    </lineage>
</organism>
<dbReference type="EC" id="1.1.1.-"/>
<dbReference type="EMBL" id="U06471">
    <property type="protein sequence ID" value="AAC43389.1"/>
    <property type="molecule type" value="Genomic_DNA"/>
</dbReference>
<dbReference type="SMR" id="P39884"/>
<dbReference type="GO" id="GO:0016491">
    <property type="term" value="F:oxidoreductase activity"/>
    <property type="evidence" value="ECO:0007669"/>
    <property type="project" value="UniProtKB-KW"/>
</dbReference>
<dbReference type="Gene3D" id="3.40.50.720">
    <property type="entry name" value="NAD(P)-binding Rossmann-like Domain"/>
    <property type="match status" value="1"/>
</dbReference>
<dbReference type="InterPro" id="IPR036291">
    <property type="entry name" value="NAD(P)-bd_dom_sf"/>
</dbReference>
<dbReference type="InterPro" id="IPR002347">
    <property type="entry name" value="SDR_fam"/>
</dbReference>
<dbReference type="PANTHER" id="PTHR42901">
    <property type="entry name" value="ALCOHOL DEHYDROGENASE"/>
    <property type="match status" value="1"/>
</dbReference>
<dbReference type="PANTHER" id="PTHR42901:SF1">
    <property type="entry name" value="ALCOHOL DEHYDROGENASE"/>
    <property type="match status" value="1"/>
</dbReference>
<dbReference type="Pfam" id="PF00106">
    <property type="entry name" value="adh_short"/>
    <property type="match status" value="1"/>
</dbReference>
<dbReference type="PRINTS" id="PR00081">
    <property type="entry name" value="GDHRDH"/>
</dbReference>
<dbReference type="SUPFAM" id="SSF51735">
    <property type="entry name" value="NAD(P)-binding Rossmann-fold domains"/>
    <property type="match status" value="1"/>
</dbReference>
<proteinExistence type="inferred from homology"/>
<comment type="similarity">
    <text evidence="2">Belongs to the short-chain dehydrogenases/reductases (SDR) family.</text>
</comment>
<name>YDFG_DICNO</name>
<protein>
    <recommendedName>
        <fullName>Probable NADP-dependent dehydrogenase in aabA 3'region</fullName>
        <ecNumber>1.1.1.-</ecNumber>
    </recommendedName>
    <alternativeName>
        <fullName>ORFB</fullName>
    </alternativeName>
</protein>
<reference key="1">
    <citation type="journal article" date="1995" name="Microbiology">
        <title>A gene region in Dichelobacter nodosus encoding a lipopolysaccharide epitope.</title>
        <authorList>
            <person name="Billington S.J."/>
            <person name="Jost B.H."/>
            <person name="Rood J.I."/>
        </authorList>
    </citation>
    <scope>NUCLEOTIDE SEQUENCE [GENOMIC DNA]</scope>
    <source>
        <strain>A198</strain>
    </source>
</reference>
<feature type="chain" id="PRO_0000054832" description="Probable NADP-dependent dehydrogenase in aabA 3'region">
    <location>
        <begin position="1"/>
        <end position="106" status="greater than"/>
    </location>
</feature>
<feature type="binding site" evidence="1">
    <location>
        <begin position="4"/>
        <end position="28"/>
    </location>
    <ligand>
        <name>NADP(+)</name>
        <dbReference type="ChEBI" id="CHEBI:58349"/>
    </ligand>
</feature>
<feature type="non-terminal residue">
    <location>
        <position position="106"/>
    </location>
</feature>
<evidence type="ECO:0000250" key="1"/>
<evidence type="ECO:0000305" key="2"/>
<keyword id="KW-0521">NADP</keyword>
<keyword id="KW-0560">Oxidoreductase</keyword>